<evidence type="ECO:0000255" key="1">
    <source>
        <dbReference type="HAMAP-Rule" id="MF_00823"/>
    </source>
</evidence>
<evidence type="ECO:0000255" key="2">
    <source>
        <dbReference type="PROSITE-ProRule" id="PRU01137"/>
    </source>
</evidence>
<proteinExistence type="inferred from homology"/>
<protein>
    <recommendedName>
        <fullName evidence="1">Acetyl-coenzyme A carboxylase carboxyl transferase subunit alpha</fullName>
        <shortName evidence="1">ACCase subunit alpha</shortName>
        <shortName evidence="1">Acetyl-CoA carboxylase carboxyltransferase subunit alpha</shortName>
        <ecNumber evidence="1">2.1.3.15</ecNumber>
    </recommendedName>
</protein>
<name>ACCA_BART1</name>
<keyword id="KW-0067">ATP-binding</keyword>
<keyword id="KW-0963">Cytoplasm</keyword>
<keyword id="KW-0275">Fatty acid biosynthesis</keyword>
<keyword id="KW-0276">Fatty acid metabolism</keyword>
<keyword id="KW-0444">Lipid biosynthesis</keyword>
<keyword id="KW-0443">Lipid metabolism</keyword>
<keyword id="KW-0547">Nucleotide-binding</keyword>
<keyword id="KW-0808">Transferase</keyword>
<organism>
    <name type="scientific">Bartonella tribocorum (strain CIP 105476 / IBS 506)</name>
    <dbReference type="NCBI Taxonomy" id="382640"/>
    <lineage>
        <taxon>Bacteria</taxon>
        <taxon>Pseudomonadati</taxon>
        <taxon>Pseudomonadota</taxon>
        <taxon>Alphaproteobacteria</taxon>
        <taxon>Hyphomicrobiales</taxon>
        <taxon>Bartonellaceae</taxon>
        <taxon>Bartonella</taxon>
    </lineage>
</organism>
<accession>A9IZR9</accession>
<sequence length="318" mass="35073">MYNYLDFEKPVADLDGKILELKKIFQEKGSLDMSDEIARLEKRSQTALNDIYKKLTPWQKTQVARHPDRPHFMDYSKRLLSDVTPLAGDRKFAEDEAIQAGFARFKGEAVAYIGQEKGHDTQTRLRYNFGSARPEGYRKAVRIMEMADRFGLPLLTFIDTAGAYPGVSAEERGQAEAIAQSTAATLRLKVPVVSVVIGEGGSGGAIAIAAANKVYMLEHAIYSVISPEGAASILWRDPARAKDAAMNMRITAQDLYRLKIIDGIISEPLGGAHRGKEIAIDATGEIISEALKAMVGKDGEVLKQERREKYLQIGRSLA</sequence>
<feature type="chain" id="PRO_1000083919" description="Acetyl-coenzyme A carboxylase carboxyl transferase subunit alpha">
    <location>
        <begin position="1"/>
        <end position="318"/>
    </location>
</feature>
<feature type="domain" description="CoA carboxyltransferase C-terminal" evidence="2">
    <location>
        <begin position="39"/>
        <end position="297"/>
    </location>
</feature>
<gene>
    <name evidence="1" type="primary">accA</name>
    <name type="ordered locus">BT_2658</name>
</gene>
<comment type="function">
    <text evidence="1">Component of the acetyl coenzyme A carboxylase (ACC) complex. First, biotin carboxylase catalyzes the carboxylation of biotin on its carrier protein (BCCP) and then the CO(2) group is transferred by the carboxyltransferase to acetyl-CoA to form malonyl-CoA.</text>
</comment>
<comment type="catalytic activity">
    <reaction evidence="1">
        <text>N(6)-carboxybiotinyl-L-lysyl-[protein] + acetyl-CoA = N(6)-biotinyl-L-lysyl-[protein] + malonyl-CoA</text>
        <dbReference type="Rhea" id="RHEA:54728"/>
        <dbReference type="Rhea" id="RHEA-COMP:10505"/>
        <dbReference type="Rhea" id="RHEA-COMP:10506"/>
        <dbReference type="ChEBI" id="CHEBI:57288"/>
        <dbReference type="ChEBI" id="CHEBI:57384"/>
        <dbReference type="ChEBI" id="CHEBI:83144"/>
        <dbReference type="ChEBI" id="CHEBI:83145"/>
        <dbReference type="EC" id="2.1.3.15"/>
    </reaction>
</comment>
<comment type="pathway">
    <text evidence="1">Lipid metabolism; malonyl-CoA biosynthesis; malonyl-CoA from acetyl-CoA: step 1/1.</text>
</comment>
<comment type="subunit">
    <text evidence="1">Acetyl-CoA carboxylase is a heterohexamer composed of biotin carboxyl carrier protein (AccB), biotin carboxylase (AccC) and two subunits each of ACCase subunit alpha (AccA) and ACCase subunit beta (AccD).</text>
</comment>
<comment type="subcellular location">
    <subcellularLocation>
        <location evidence="1">Cytoplasm</location>
    </subcellularLocation>
</comment>
<comment type="similarity">
    <text evidence="1">Belongs to the AccA family.</text>
</comment>
<reference key="1">
    <citation type="journal article" date="2007" name="Nat. Genet.">
        <title>Genomic analysis of Bartonella identifies type IV secretion systems as host adaptability factors.</title>
        <authorList>
            <person name="Saenz H.L."/>
            <person name="Engel P."/>
            <person name="Stoeckli M.C."/>
            <person name="Lanz C."/>
            <person name="Raddatz G."/>
            <person name="Vayssier-Taussat M."/>
            <person name="Birtles R."/>
            <person name="Schuster S.C."/>
            <person name="Dehio C."/>
        </authorList>
    </citation>
    <scope>NUCLEOTIDE SEQUENCE [LARGE SCALE GENOMIC DNA]</scope>
    <source>
        <strain>CIP 105476 / IBS 506</strain>
    </source>
</reference>
<dbReference type="EC" id="2.1.3.15" evidence="1"/>
<dbReference type="EMBL" id="AM260525">
    <property type="protein sequence ID" value="CAK02606.1"/>
    <property type="molecule type" value="Genomic_DNA"/>
</dbReference>
<dbReference type="RefSeq" id="WP_012232599.1">
    <property type="nucleotide sequence ID" value="NC_010161.1"/>
</dbReference>
<dbReference type="SMR" id="A9IZR9"/>
<dbReference type="KEGG" id="btr:BT_2658"/>
<dbReference type="eggNOG" id="COG0825">
    <property type="taxonomic scope" value="Bacteria"/>
</dbReference>
<dbReference type="HOGENOM" id="CLU_015486_0_2_5"/>
<dbReference type="UniPathway" id="UPA00655">
    <property type="reaction ID" value="UER00711"/>
</dbReference>
<dbReference type="Proteomes" id="UP000001592">
    <property type="component" value="Chromosome"/>
</dbReference>
<dbReference type="GO" id="GO:0009317">
    <property type="term" value="C:acetyl-CoA carboxylase complex"/>
    <property type="evidence" value="ECO:0007669"/>
    <property type="project" value="InterPro"/>
</dbReference>
<dbReference type="GO" id="GO:0003989">
    <property type="term" value="F:acetyl-CoA carboxylase activity"/>
    <property type="evidence" value="ECO:0007669"/>
    <property type="project" value="InterPro"/>
</dbReference>
<dbReference type="GO" id="GO:0005524">
    <property type="term" value="F:ATP binding"/>
    <property type="evidence" value="ECO:0007669"/>
    <property type="project" value="UniProtKB-KW"/>
</dbReference>
<dbReference type="GO" id="GO:0016743">
    <property type="term" value="F:carboxyl- or carbamoyltransferase activity"/>
    <property type="evidence" value="ECO:0007669"/>
    <property type="project" value="UniProtKB-UniRule"/>
</dbReference>
<dbReference type="GO" id="GO:0006633">
    <property type="term" value="P:fatty acid biosynthetic process"/>
    <property type="evidence" value="ECO:0007669"/>
    <property type="project" value="UniProtKB-KW"/>
</dbReference>
<dbReference type="GO" id="GO:2001295">
    <property type="term" value="P:malonyl-CoA biosynthetic process"/>
    <property type="evidence" value="ECO:0007669"/>
    <property type="project" value="UniProtKB-UniRule"/>
</dbReference>
<dbReference type="Gene3D" id="3.90.226.10">
    <property type="entry name" value="2-enoyl-CoA Hydratase, Chain A, domain 1"/>
    <property type="match status" value="1"/>
</dbReference>
<dbReference type="HAMAP" id="MF_00823">
    <property type="entry name" value="AcetylCoA_CT_alpha"/>
    <property type="match status" value="1"/>
</dbReference>
<dbReference type="InterPro" id="IPR001095">
    <property type="entry name" value="Acetyl_CoA_COase_a_su"/>
</dbReference>
<dbReference type="InterPro" id="IPR029045">
    <property type="entry name" value="ClpP/crotonase-like_dom_sf"/>
</dbReference>
<dbReference type="InterPro" id="IPR011763">
    <property type="entry name" value="COA_CT_C"/>
</dbReference>
<dbReference type="NCBIfam" id="TIGR00513">
    <property type="entry name" value="accA"/>
    <property type="match status" value="1"/>
</dbReference>
<dbReference type="NCBIfam" id="NF041504">
    <property type="entry name" value="AccA_sub"/>
    <property type="match status" value="1"/>
</dbReference>
<dbReference type="NCBIfam" id="NF004344">
    <property type="entry name" value="PRK05724.1"/>
    <property type="match status" value="1"/>
</dbReference>
<dbReference type="PANTHER" id="PTHR42853">
    <property type="entry name" value="ACETYL-COENZYME A CARBOXYLASE CARBOXYL TRANSFERASE SUBUNIT ALPHA"/>
    <property type="match status" value="1"/>
</dbReference>
<dbReference type="PANTHER" id="PTHR42853:SF3">
    <property type="entry name" value="ACETYL-COENZYME A CARBOXYLASE CARBOXYL TRANSFERASE SUBUNIT ALPHA, CHLOROPLASTIC"/>
    <property type="match status" value="1"/>
</dbReference>
<dbReference type="Pfam" id="PF03255">
    <property type="entry name" value="ACCA"/>
    <property type="match status" value="1"/>
</dbReference>
<dbReference type="PRINTS" id="PR01069">
    <property type="entry name" value="ACCCTRFRASEA"/>
</dbReference>
<dbReference type="SUPFAM" id="SSF52096">
    <property type="entry name" value="ClpP/crotonase"/>
    <property type="match status" value="1"/>
</dbReference>
<dbReference type="PROSITE" id="PS50989">
    <property type="entry name" value="COA_CT_CTER"/>
    <property type="match status" value="1"/>
</dbReference>